<gene>
    <name evidence="1" type="primary">frr</name>
    <name type="ordered locus">WS0314</name>
</gene>
<accession>Q7MAD8</accession>
<protein>
    <recommendedName>
        <fullName evidence="1">Ribosome-recycling factor</fullName>
        <shortName evidence="1">RRF</shortName>
    </recommendedName>
    <alternativeName>
        <fullName evidence="1">Ribosome-releasing factor</fullName>
    </alternativeName>
</protein>
<proteinExistence type="inferred from homology"/>
<name>RRF_WOLSU</name>
<feature type="chain" id="PRO_0000167580" description="Ribosome-recycling factor">
    <location>
        <begin position="1"/>
        <end position="186"/>
    </location>
</feature>
<keyword id="KW-0963">Cytoplasm</keyword>
<keyword id="KW-0648">Protein biosynthesis</keyword>
<keyword id="KW-1185">Reference proteome</keyword>
<comment type="function">
    <text evidence="1">Responsible for the release of ribosomes from messenger RNA at the termination of protein biosynthesis. May increase the efficiency of translation by recycling ribosomes from one round of translation to another.</text>
</comment>
<comment type="subcellular location">
    <subcellularLocation>
        <location evidence="1">Cytoplasm</location>
    </subcellularLocation>
</comment>
<comment type="similarity">
    <text evidence="1">Belongs to the RRF family.</text>
</comment>
<evidence type="ECO:0000255" key="1">
    <source>
        <dbReference type="HAMAP-Rule" id="MF_00040"/>
    </source>
</evidence>
<reference key="1">
    <citation type="journal article" date="2003" name="Proc. Natl. Acad. Sci. U.S.A.">
        <title>Complete genome sequence and analysis of Wolinella succinogenes.</title>
        <authorList>
            <person name="Baar C."/>
            <person name="Eppinger M."/>
            <person name="Raddatz G."/>
            <person name="Simon J."/>
            <person name="Lanz C."/>
            <person name="Klimmek O."/>
            <person name="Nandakumar R."/>
            <person name="Gross R."/>
            <person name="Rosinus A."/>
            <person name="Keller H."/>
            <person name="Jagtap P."/>
            <person name="Linke B."/>
            <person name="Meyer F."/>
            <person name="Lederer H."/>
            <person name="Schuster S.C."/>
        </authorList>
    </citation>
    <scope>NUCLEOTIDE SEQUENCE [LARGE SCALE GENOMIC DNA]</scope>
    <source>
        <strain>ATCC 29543 / DSM 1740 / CCUG 13145 / JCM 31913 / LMG 7466 / NCTC 11488 / FDC 602W</strain>
    </source>
</reference>
<organism>
    <name type="scientific">Wolinella succinogenes (strain ATCC 29543 / DSM 1740 / CCUG 13145 / JCM 31913 / LMG 7466 / NCTC 11488 / FDC 602W)</name>
    <name type="common">Vibrio succinogenes</name>
    <dbReference type="NCBI Taxonomy" id="273121"/>
    <lineage>
        <taxon>Bacteria</taxon>
        <taxon>Pseudomonadati</taxon>
        <taxon>Campylobacterota</taxon>
        <taxon>Epsilonproteobacteria</taxon>
        <taxon>Campylobacterales</taxon>
        <taxon>Helicobacteraceae</taxon>
        <taxon>Wolinella</taxon>
    </lineage>
</organism>
<sequence length="186" mass="21114">MELNEVYQYTKEHMEKTIDAMKRDFATLRTGKVSTAIVEPIRVDYYGTPTPLSQVGSVIASDATTLVISPWEKNLLKGIEKAIQEANIGVNPNNDGDVIKLFFPPMTSEQRKEIAKDAKALGEKAKVAVRNIRKESNDKIKKLEKDKLITEDQSKKAHDEVQKYTDDYVKKIDDMVKSKEEEILKV</sequence>
<dbReference type="EMBL" id="BX571657">
    <property type="protein sequence ID" value="CAE09465.1"/>
    <property type="molecule type" value="Genomic_DNA"/>
</dbReference>
<dbReference type="RefSeq" id="WP_011138266.1">
    <property type="nucleotide sequence ID" value="NC_005090.1"/>
</dbReference>
<dbReference type="SMR" id="Q7MAD8"/>
<dbReference type="STRING" id="273121.WS0314"/>
<dbReference type="KEGG" id="wsu:WS0314"/>
<dbReference type="eggNOG" id="COG0233">
    <property type="taxonomic scope" value="Bacteria"/>
</dbReference>
<dbReference type="HOGENOM" id="CLU_073981_2_0_7"/>
<dbReference type="Proteomes" id="UP000000422">
    <property type="component" value="Chromosome"/>
</dbReference>
<dbReference type="GO" id="GO:0005829">
    <property type="term" value="C:cytosol"/>
    <property type="evidence" value="ECO:0007669"/>
    <property type="project" value="GOC"/>
</dbReference>
<dbReference type="GO" id="GO:0043023">
    <property type="term" value="F:ribosomal large subunit binding"/>
    <property type="evidence" value="ECO:0007669"/>
    <property type="project" value="TreeGrafter"/>
</dbReference>
<dbReference type="GO" id="GO:0002184">
    <property type="term" value="P:cytoplasmic translational termination"/>
    <property type="evidence" value="ECO:0007669"/>
    <property type="project" value="TreeGrafter"/>
</dbReference>
<dbReference type="CDD" id="cd00520">
    <property type="entry name" value="RRF"/>
    <property type="match status" value="1"/>
</dbReference>
<dbReference type="FunFam" id="1.10.132.20:FF:000001">
    <property type="entry name" value="Ribosome-recycling factor"/>
    <property type="match status" value="1"/>
</dbReference>
<dbReference type="FunFam" id="3.30.1360.40:FF:000001">
    <property type="entry name" value="Ribosome-recycling factor"/>
    <property type="match status" value="1"/>
</dbReference>
<dbReference type="Gene3D" id="3.30.1360.40">
    <property type="match status" value="1"/>
</dbReference>
<dbReference type="Gene3D" id="1.10.132.20">
    <property type="entry name" value="Ribosome-recycling factor"/>
    <property type="match status" value="1"/>
</dbReference>
<dbReference type="HAMAP" id="MF_00040">
    <property type="entry name" value="RRF"/>
    <property type="match status" value="1"/>
</dbReference>
<dbReference type="InterPro" id="IPR002661">
    <property type="entry name" value="Ribosome_recyc_fac"/>
</dbReference>
<dbReference type="InterPro" id="IPR023584">
    <property type="entry name" value="Ribosome_recyc_fac_dom"/>
</dbReference>
<dbReference type="InterPro" id="IPR036191">
    <property type="entry name" value="RRF_sf"/>
</dbReference>
<dbReference type="NCBIfam" id="TIGR00496">
    <property type="entry name" value="frr"/>
    <property type="match status" value="1"/>
</dbReference>
<dbReference type="PANTHER" id="PTHR20982:SF3">
    <property type="entry name" value="MITOCHONDRIAL RIBOSOME RECYCLING FACTOR PSEUDO 1"/>
    <property type="match status" value="1"/>
</dbReference>
<dbReference type="PANTHER" id="PTHR20982">
    <property type="entry name" value="RIBOSOME RECYCLING FACTOR"/>
    <property type="match status" value="1"/>
</dbReference>
<dbReference type="Pfam" id="PF01765">
    <property type="entry name" value="RRF"/>
    <property type="match status" value="1"/>
</dbReference>
<dbReference type="SUPFAM" id="SSF55194">
    <property type="entry name" value="Ribosome recycling factor, RRF"/>
    <property type="match status" value="1"/>
</dbReference>